<proteinExistence type="inferred from homology"/>
<sequence>MGPVMLNVEGCELDAEEREILAHPLVGGLILFTRNYHDPEQLRELVRQIRAASRNHLVVAVDQEGGRVQRFREGFTRLPAAQSFFALHGLEEGGRLAQEAGWLMASEMIAMDIDISFAPVLDVGHISAAIGERSYHADPAKALAMATRFIDGMHDAGMKTTGKHFPGHGAVTADSHKETPCDPRPETDIRGKDMSVFRALISENKLDAIMPAHVIYRAIDPRPASGSPYWLKTVLRQELGFDGVIFSDDLSMEGAAIMGSYAERAQASLDAGCDMILVCNNRKGAVSVLDNLSPIKAERVTRLYHKGSFSRRELMDSARWKTASAQLNQLHERWQEEKAGH</sequence>
<name>NAGZ_SALTI</name>
<comment type="function">
    <text evidence="1">Plays a role in peptidoglycan recycling by cleaving the terminal beta-1,4-linked N-acetylglucosamine (GlcNAc) from peptide-linked peptidoglycan fragments, giving rise to free GlcNAc, anhydro-N-acetylmuramic acid and anhydro-N-acetylmuramic acid-linked peptides.</text>
</comment>
<comment type="catalytic activity">
    <reaction evidence="1">
        <text>Hydrolysis of terminal non-reducing N-acetyl-D-hexosamine residues in N-acetyl-beta-D-hexosaminides.</text>
        <dbReference type="EC" id="3.2.1.52"/>
    </reaction>
</comment>
<comment type="pathway">
    <text evidence="1">Cell wall biogenesis; peptidoglycan recycling.</text>
</comment>
<comment type="subcellular location">
    <subcellularLocation>
        <location evidence="1">Cytoplasm</location>
    </subcellularLocation>
</comment>
<comment type="similarity">
    <text evidence="1">Belongs to the glycosyl hydrolase 3 family. NagZ subfamily.</text>
</comment>
<reference key="1">
    <citation type="journal article" date="2001" name="Nature">
        <title>Complete genome sequence of a multiple drug resistant Salmonella enterica serovar Typhi CT18.</title>
        <authorList>
            <person name="Parkhill J."/>
            <person name="Dougan G."/>
            <person name="James K.D."/>
            <person name="Thomson N.R."/>
            <person name="Pickard D."/>
            <person name="Wain J."/>
            <person name="Churcher C.M."/>
            <person name="Mungall K.L."/>
            <person name="Bentley S.D."/>
            <person name="Holden M.T.G."/>
            <person name="Sebaihia M."/>
            <person name="Baker S."/>
            <person name="Basham D."/>
            <person name="Brooks K."/>
            <person name="Chillingworth T."/>
            <person name="Connerton P."/>
            <person name="Cronin A."/>
            <person name="Davis P."/>
            <person name="Davies R.M."/>
            <person name="Dowd L."/>
            <person name="White N."/>
            <person name="Farrar J."/>
            <person name="Feltwell T."/>
            <person name="Hamlin N."/>
            <person name="Haque A."/>
            <person name="Hien T.T."/>
            <person name="Holroyd S."/>
            <person name="Jagels K."/>
            <person name="Krogh A."/>
            <person name="Larsen T.S."/>
            <person name="Leather S."/>
            <person name="Moule S."/>
            <person name="O'Gaora P."/>
            <person name="Parry C."/>
            <person name="Quail M.A."/>
            <person name="Rutherford K.M."/>
            <person name="Simmonds M."/>
            <person name="Skelton J."/>
            <person name="Stevens K."/>
            <person name="Whitehead S."/>
            <person name="Barrell B.G."/>
        </authorList>
    </citation>
    <scope>NUCLEOTIDE SEQUENCE [LARGE SCALE GENOMIC DNA]</scope>
    <source>
        <strain>CT18</strain>
    </source>
</reference>
<reference key="2">
    <citation type="journal article" date="2003" name="J. Bacteriol.">
        <title>Comparative genomics of Salmonella enterica serovar Typhi strains Ty2 and CT18.</title>
        <authorList>
            <person name="Deng W."/>
            <person name="Liou S.-R."/>
            <person name="Plunkett G. III"/>
            <person name="Mayhew G.F."/>
            <person name="Rose D.J."/>
            <person name="Burland V."/>
            <person name="Kodoyianni V."/>
            <person name="Schwartz D.C."/>
            <person name="Blattner F.R."/>
        </authorList>
    </citation>
    <scope>NUCLEOTIDE SEQUENCE [LARGE SCALE GENOMIC DNA]</scope>
    <source>
        <strain>ATCC 700931 / Ty2</strain>
    </source>
</reference>
<dbReference type="EC" id="3.2.1.52" evidence="1"/>
<dbReference type="EMBL" id="AL513382">
    <property type="protein sequence ID" value="CAD08333.1"/>
    <property type="molecule type" value="Genomic_DNA"/>
</dbReference>
<dbReference type="EMBL" id="AE014613">
    <property type="protein sequence ID" value="AAO69336.1"/>
    <property type="molecule type" value="Genomic_DNA"/>
</dbReference>
<dbReference type="RefSeq" id="NP_455701.1">
    <property type="nucleotide sequence ID" value="NC_003198.1"/>
</dbReference>
<dbReference type="RefSeq" id="WP_000529339.1">
    <property type="nucleotide sequence ID" value="NZ_WSUR01000030.1"/>
</dbReference>
<dbReference type="SMR" id="Q8Z7I6"/>
<dbReference type="STRING" id="220341.gene:17585213"/>
<dbReference type="KEGG" id="stt:t1711"/>
<dbReference type="KEGG" id="sty:STY1249"/>
<dbReference type="PATRIC" id="fig|220341.7.peg.1251"/>
<dbReference type="eggNOG" id="COG1472">
    <property type="taxonomic scope" value="Bacteria"/>
</dbReference>
<dbReference type="HOGENOM" id="CLU_008392_0_0_6"/>
<dbReference type="OMA" id="WQMAAEM"/>
<dbReference type="OrthoDB" id="9786661at2"/>
<dbReference type="UniPathway" id="UPA00544"/>
<dbReference type="Proteomes" id="UP000000541">
    <property type="component" value="Chromosome"/>
</dbReference>
<dbReference type="Proteomes" id="UP000002670">
    <property type="component" value="Chromosome"/>
</dbReference>
<dbReference type="GO" id="GO:0005737">
    <property type="term" value="C:cytoplasm"/>
    <property type="evidence" value="ECO:0007669"/>
    <property type="project" value="UniProtKB-SubCell"/>
</dbReference>
<dbReference type="GO" id="GO:0004563">
    <property type="term" value="F:beta-N-acetylhexosaminidase activity"/>
    <property type="evidence" value="ECO:0007669"/>
    <property type="project" value="UniProtKB-UniRule"/>
</dbReference>
<dbReference type="GO" id="GO:0005975">
    <property type="term" value="P:carbohydrate metabolic process"/>
    <property type="evidence" value="ECO:0007669"/>
    <property type="project" value="InterPro"/>
</dbReference>
<dbReference type="GO" id="GO:0051301">
    <property type="term" value="P:cell division"/>
    <property type="evidence" value="ECO:0007669"/>
    <property type="project" value="UniProtKB-KW"/>
</dbReference>
<dbReference type="GO" id="GO:0071555">
    <property type="term" value="P:cell wall organization"/>
    <property type="evidence" value="ECO:0007669"/>
    <property type="project" value="UniProtKB-KW"/>
</dbReference>
<dbReference type="GO" id="GO:0009252">
    <property type="term" value="P:peptidoglycan biosynthetic process"/>
    <property type="evidence" value="ECO:0007669"/>
    <property type="project" value="UniProtKB-KW"/>
</dbReference>
<dbReference type="GO" id="GO:0009254">
    <property type="term" value="P:peptidoglycan turnover"/>
    <property type="evidence" value="ECO:0007669"/>
    <property type="project" value="UniProtKB-UniRule"/>
</dbReference>
<dbReference type="GO" id="GO:0008360">
    <property type="term" value="P:regulation of cell shape"/>
    <property type="evidence" value="ECO:0007669"/>
    <property type="project" value="UniProtKB-KW"/>
</dbReference>
<dbReference type="FunFam" id="3.20.20.300:FF:000001">
    <property type="entry name" value="Beta-hexosaminidase"/>
    <property type="match status" value="1"/>
</dbReference>
<dbReference type="Gene3D" id="3.20.20.300">
    <property type="entry name" value="Glycoside hydrolase, family 3, N-terminal domain"/>
    <property type="match status" value="1"/>
</dbReference>
<dbReference type="HAMAP" id="MF_00364">
    <property type="entry name" value="NagZ"/>
    <property type="match status" value="1"/>
</dbReference>
<dbReference type="InterPro" id="IPR022956">
    <property type="entry name" value="Beta_hexosaminidase_bac"/>
</dbReference>
<dbReference type="InterPro" id="IPR019800">
    <property type="entry name" value="Glyco_hydro_3_AS"/>
</dbReference>
<dbReference type="InterPro" id="IPR001764">
    <property type="entry name" value="Glyco_hydro_3_N"/>
</dbReference>
<dbReference type="InterPro" id="IPR036962">
    <property type="entry name" value="Glyco_hydro_3_N_sf"/>
</dbReference>
<dbReference type="InterPro" id="IPR017853">
    <property type="entry name" value="Glycoside_hydrolase_SF"/>
</dbReference>
<dbReference type="InterPro" id="IPR050226">
    <property type="entry name" value="NagZ_Beta-hexosaminidase"/>
</dbReference>
<dbReference type="NCBIfam" id="NF003740">
    <property type="entry name" value="PRK05337.1"/>
    <property type="match status" value="1"/>
</dbReference>
<dbReference type="PANTHER" id="PTHR30480:SF13">
    <property type="entry name" value="BETA-HEXOSAMINIDASE"/>
    <property type="match status" value="1"/>
</dbReference>
<dbReference type="PANTHER" id="PTHR30480">
    <property type="entry name" value="BETA-HEXOSAMINIDASE-RELATED"/>
    <property type="match status" value="1"/>
</dbReference>
<dbReference type="Pfam" id="PF00933">
    <property type="entry name" value="Glyco_hydro_3"/>
    <property type="match status" value="1"/>
</dbReference>
<dbReference type="SUPFAM" id="SSF51445">
    <property type="entry name" value="(Trans)glycosidases"/>
    <property type="match status" value="1"/>
</dbReference>
<dbReference type="PROSITE" id="PS00775">
    <property type="entry name" value="GLYCOSYL_HYDROL_F3"/>
    <property type="match status" value="1"/>
</dbReference>
<feature type="chain" id="PRO_0000210796" description="Beta-hexosaminidase">
    <location>
        <begin position="1"/>
        <end position="341"/>
    </location>
</feature>
<feature type="active site" description="Proton donor/acceptor" evidence="1">
    <location>
        <position position="176"/>
    </location>
</feature>
<feature type="active site" description="Nucleophile" evidence="1">
    <location>
        <position position="248"/>
    </location>
</feature>
<feature type="binding site" evidence="1">
    <location>
        <position position="62"/>
    </location>
    <ligand>
        <name>substrate</name>
    </ligand>
</feature>
<feature type="binding site" evidence="1">
    <location>
        <position position="70"/>
    </location>
    <ligand>
        <name>substrate</name>
    </ligand>
</feature>
<feature type="binding site" evidence="1">
    <location>
        <position position="133"/>
    </location>
    <ligand>
        <name>substrate</name>
    </ligand>
</feature>
<feature type="binding site" evidence="1">
    <location>
        <begin position="163"/>
        <end position="164"/>
    </location>
    <ligand>
        <name>substrate</name>
    </ligand>
</feature>
<feature type="site" description="Important for catalytic activity" evidence="1">
    <location>
        <position position="174"/>
    </location>
</feature>
<organism>
    <name type="scientific">Salmonella typhi</name>
    <dbReference type="NCBI Taxonomy" id="90370"/>
    <lineage>
        <taxon>Bacteria</taxon>
        <taxon>Pseudomonadati</taxon>
        <taxon>Pseudomonadota</taxon>
        <taxon>Gammaproteobacteria</taxon>
        <taxon>Enterobacterales</taxon>
        <taxon>Enterobacteriaceae</taxon>
        <taxon>Salmonella</taxon>
    </lineage>
</organism>
<evidence type="ECO:0000255" key="1">
    <source>
        <dbReference type="HAMAP-Rule" id="MF_00364"/>
    </source>
</evidence>
<gene>
    <name evidence="1" type="primary">nagZ</name>
    <name type="ordered locus">STY1249</name>
    <name type="ordered locus">t1711</name>
</gene>
<protein>
    <recommendedName>
        <fullName evidence="1">Beta-hexosaminidase</fullName>
        <ecNumber evidence="1">3.2.1.52</ecNumber>
    </recommendedName>
    <alternativeName>
        <fullName evidence="1">Beta-N-acetylhexosaminidase</fullName>
    </alternativeName>
    <alternativeName>
        <fullName evidence="1">N-acetyl-beta-glucosaminidase</fullName>
    </alternativeName>
</protein>
<keyword id="KW-0131">Cell cycle</keyword>
<keyword id="KW-0132">Cell division</keyword>
<keyword id="KW-0133">Cell shape</keyword>
<keyword id="KW-0961">Cell wall biogenesis/degradation</keyword>
<keyword id="KW-0963">Cytoplasm</keyword>
<keyword id="KW-0326">Glycosidase</keyword>
<keyword id="KW-0378">Hydrolase</keyword>
<keyword id="KW-0573">Peptidoglycan synthesis</keyword>
<accession>Q8Z7I6</accession>